<evidence type="ECO:0000255" key="1">
    <source>
        <dbReference type="HAMAP-Rule" id="MF_00095"/>
    </source>
</evidence>
<dbReference type="EMBL" id="CP000825">
    <property type="protein sequence ID" value="ABV49903.1"/>
    <property type="molecule type" value="Genomic_DNA"/>
</dbReference>
<dbReference type="RefSeq" id="WP_012007062.1">
    <property type="nucleotide sequence ID" value="NC_009840.1"/>
</dbReference>
<dbReference type="SMR" id="A8G2S2"/>
<dbReference type="STRING" id="93060.P9215_02861"/>
<dbReference type="KEGG" id="pmh:P9215_02861"/>
<dbReference type="eggNOG" id="COG1489">
    <property type="taxonomic scope" value="Bacteria"/>
</dbReference>
<dbReference type="HOGENOM" id="CLU_052299_2_0_3"/>
<dbReference type="OrthoDB" id="9802365at2"/>
<dbReference type="Proteomes" id="UP000002014">
    <property type="component" value="Chromosome"/>
</dbReference>
<dbReference type="GO" id="GO:0003677">
    <property type="term" value="F:DNA binding"/>
    <property type="evidence" value="ECO:0007669"/>
    <property type="project" value="InterPro"/>
</dbReference>
<dbReference type="CDD" id="cd22359">
    <property type="entry name" value="SfsA-like_bacterial"/>
    <property type="match status" value="1"/>
</dbReference>
<dbReference type="Gene3D" id="2.40.50.580">
    <property type="match status" value="1"/>
</dbReference>
<dbReference type="Gene3D" id="3.40.1350.60">
    <property type="match status" value="1"/>
</dbReference>
<dbReference type="HAMAP" id="MF_00095">
    <property type="entry name" value="SfsA"/>
    <property type="match status" value="1"/>
</dbReference>
<dbReference type="InterPro" id="IPR005224">
    <property type="entry name" value="SfsA"/>
</dbReference>
<dbReference type="InterPro" id="IPR040452">
    <property type="entry name" value="SfsA_C"/>
</dbReference>
<dbReference type="InterPro" id="IPR041465">
    <property type="entry name" value="SfsA_N"/>
</dbReference>
<dbReference type="NCBIfam" id="TIGR00230">
    <property type="entry name" value="sfsA"/>
    <property type="match status" value="1"/>
</dbReference>
<dbReference type="PANTHER" id="PTHR30545">
    <property type="entry name" value="SUGAR FERMENTATION STIMULATION PROTEIN A"/>
    <property type="match status" value="1"/>
</dbReference>
<dbReference type="PANTHER" id="PTHR30545:SF2">
    <property type="entry name" value="SUGAR FERMENTATION STIMULATION PROTEIN A"/>
    <property type="match status" value="1"/>
</dbReference>
<dbReference type="Pfam" id="PF03749">
    <property type="entry name" value="SfsA"/>
    <property type="match status" value="1"/>
</dbReference>
<dbReference type="Pfam" id="PF17746">
    <property type="entry name" value="SfsA_N"/>
    <property type="match status" value="1"/>
</dbReference>
<proteinExistence type="inferred from homology"/>
<accession>A8G2S2</accession>
<protein>
    <recommendedName>
        <fullName evidence="1">Sugar fermentation stimulation protein homolog</fullName>
    </recommendedName>
</protein>
<organism>
    <name type="scientific">Prochlorococcus marinus (strain MIT 9215)</name>
    <dbReference type="NCBI Taxonomy" id="93060"/>
    <lineage>
        <taxon>Bacteria</taxon>
        <taxon>Bacillati</taxon>
        <taxon>Cyanobacteriota</taxon>
        <taxon>Cyanophyceae</taxon>
        <taxon>Synechococcales</taxon>
        <taxon>Prochlorococcaceae</taxon>
        <taxon>Prochlorococcus</taxon>
    </lineage>
</organism>
<comment type="similarity">
    <text evidence="1">Belongs to the SfsA family.</text>
</comment>
<sequence length="246" mass="28047">MNDRIIEFDPLIEGVLIKRYKRFLADIKLESGDVVTAHCANTGPMKGLLTEGAKVRISVSHSPKRKLPFTWEQICVLDSKNDEVWVGINTLFANKLIKKVIAKNLLREIIGEVETIQSEIPYGKDKKSRIDFFLTPKSSNPDKRNIYIEVKNTTWIKDNIALFPDTVTKRGQKHLIELKELIPESKSVLVLCITRKDACFFAPGDEADPLYGNLFRESLSAGMIPIPCSFEFYKDHVRWNGIKPLK</sequence>
<gene>
    <name evidence="1" type="primary">sfsA</name>
    <name type="ordered locus">P9215_02861</name>
</gene>
<feature type="chain" id="PRO_1000057631" description="Sugar fermentation stimulation protein homolog">
    <location>
        <begin position="1"/>
        <end position="246"/>
    </location>
</feature>
<reference key="1">
    <citation type="journal article" date="2007" name="PLoS Genet.">
        <title>Patterns and implications of gene gain and loss in the evolution of Prochlorococcus.</title>
        <authorList>
            <person name="Kettler G.C."/>
            <person name="Martiny A.C."/>
            <person name="Huang K."/>
            <person name="Zucker J."/>
            <person name="Coleman M.L."/>
            <person name="Rodrigue S."/>
            <person name="Chen F."/>
            <person name="Lapidus A."/>
            <person name="Ferriera S."/>
            <person name="Johnson J."/>
            <person name="Steglich C."/>
            <person name="Church G.M."/>
            <person name="Richardson P."/>
            <person name="Chisholm S.W."/>
        </authorList>
    </citation>
    <scope>NUCLEOTIDE SEQUENCE [LARGE SCALE GENOMIC DNA]</scope>
    <source>
        <strain>MIT 9215</strain>
    </source>
</reference>
<name>SFSA_PROM2</name>